<dbReference type="EC" id="7.1.1.-" evidence="1"/>
<dbReference type="EMBL" id="AE017126">
    <property type="protein sequence ID" value="AAP99370.1"/>
    <property type="molecule type" value="Genomic_DNA"/>
</dbReference>
<dbReference type="RefSeq" id="NP_874718.1">
    <property type="nucleotide sequence ID" value="NC_005042.1"/>
</dbReference>
<dbReference type="SMR" id="Q7VDP4"/>
<dbReference type="STRING" id="167539.Pro_0324"/>
<dbReference type="EnsemblBacteria" id="AAP99370">
    <property type="protein sequence ID" value="AAP99370"/>
    <property type="gene ID" value="Pro_0324"/>
</dbReference>
<dbReference type="KEGG" id="pma:Pro_0324"/>
<dbReference type="PATRIC" id="fig|167539.5.peg.333"/>
<dbReference type="eggNOG" id="COG0377">
    <property type="taxonomic scope" value="Bacteria"/>
</dbReference>
<dbReference type="HOGENOM" id="CLU_055737_2_1_3"/>
<dbReference type="OrthoDB" id="9786737at2"/>
<dbReference type="Proteomes" id="UP000001420">
    <property type="component" value="Chromosome"/>
</dbReference>
<dbReference type="GO" id="GO:0031676">
    <property type="term" value="C:plasma membrane-derived thylakoid membrane"/>
    <property type="evidence" value="ECO:0007669"/>
    <property type="project" value="UniProtKB-SubCell"/>
</dbReference>
<dbReference type="GO" id="GO:0045271">
    <property type="term" value="C:respiratory chain complex I"/>
    <property type="evidence" value="ECO:0007669"/>
    <property type="project" value="TreeGrafter"/>
</dbReference>
<dbReference type="GO" id="GO:0051539">
    <property type="term" value="F:4 iron, 4 sulfur cluster binding"/>
    <property type="evidence" value="ECO:0007669"/>
    <property type="project" value="UniProtKB-KW"/>
</dbReference>
<dbReference type="GO" id="GO:0005506">
    <property type="term" value="F:iron ion binding"/>
    <property type="evidence" value="ECO:0007669"/>
    <property type="project" value="UniProtKB-UniRule"/>
</dbReference>
<dbReference type="GO" id="GO:0008137">
    <property type="term" value="F:NADH dehydrogenase (ubiquinone) activity"/>
    <property type="evidence" value="ECO:0007669"/>
    <property type="project" value="InterPro"/>
</dbReference>
<dbReference type="GO" id="GO:0048038">
    <property type="term" value="F:quinone binding"/>
    <property type="evidence" value="ECO:0007669"/>
    <property type="project" value="UniProtKB-KW"/>
</dbReference>
<dbReference type="GO" id="GO:0009060">
    <property type="term" value="P:aerobic respiration"/>
    <property type="evidence" value="ECO:0007669"/>
    <property type="project" value="TreeGrafter"/>
</dbReference>
<dbReference type="GO" id="GO:0015990">
    <property type="term" value="P:electron transport coupled proton transport"/>
    <property type="evidence" value="ECO:0007669"/>
    <property type="project" value="TreeGrafter"/>
</dbReference>
<dbReference type="GO" id="GO:0019684">
    <property type="term" value="P:photosynthesis, light reaction"/>
    <property type="evidence" value="ECO:0007669"/>
    <property type="project" value="UniProtKB-UniRule"/>
</dbReference>
<dbReference type="FunFam" id="3.40.50.12280:FF:000003">
    <property type="entry name" value="NAD(P)H-quinone oxidoreductase subunit K, chloroplastic"/>
    <property type="match status" value="1"/>
</dbReference>
<dbReference type="Gene3D" id="3.40.50.12280">
    <property type="match status" value="1"/>
</dbReference>
<dbReference type="HAMAP" id="MF_01356">
    <property type="entry name" value="NDH1_NuoB"/>
    <property type="match status" value="1"/>
</dbReference>
<dbReference type="InterPro" id="IPR006137">
    <property type="entry name" value="NADH_UbQ_OxRdtase-like_20kDa"/>
</dbReference>
<dbReference type="InterPro" id="IPR006138">
    <property type="entry name" value="NADH_UQ_OxRdtase_20Kd_su"/>
</dbReference>
<dbReference type="NCBIfam" id="TIGR01957">
    <property type="entry name" value="nuoB_fam"/>
    <property type="match status" value="1"/>
</dbReference>
<dbReference type="NCBIfam" id="NF005012">
    <property type="entry name" value="PRK06411.1"/>
    <property type="match status" value="1"/>
</dbReference>
<dbReference type="PANTHER" id="PTHR11995">
    <property type="entry name" value="NADH DEHYDROGENASE"/>
    <property type="match status" value="1"/>
</dbReference>
<dbReference type="PANTHER" id="PTHR11995:SF14">
    <property type="entry name" value="NADH DEHYDROGENASE [UBIQUINONE] IRON-SULFUR PROTEIN 7, MITOCHONDRIAL"/>
    <property type="match status" value="1"/>
</dbReference>
<dbReference type="Pfam" id="PF01058">
    <property type="entry name" value="Oxidored_q6"/>
    <property type="match status" value="1"/>
</dbReference>
<dbReference type="SUPFAM" id="SSF56770">
    <property type="entry name" value="HydA/Nqo6-like"/>
    <property type="match status" value="1"/>
</dbReference>
<dbReference type="PROSITE" id="PS01150">
    <property type="entry name" value="COMPLEX1_20K"/>
    <property type="match status" value="1"/>
</dbReference>
<name>NDHK_PROMA</name>
<proteinExistence type="inferred from homology"/>
<accession>Q7VDP4</accession>
<keyword id="KW-0004">4Fe-4S</keyword>
<keyword id="KW-0408">Iron</keyword>
<keyword id="KW-0411">Iron-sulfur</keyword>
<keyword id="KW-0472">Membrane</keyword>
<keyword id="KW-0479">Metal-binding</keyword>
<keyword id="KW-0520">NAD</keyword>
<keyword id="KW-0521">NADP</keyword>
<keyword id="KW-0618">Plastoquinone</keyword>
<keyword id="KW-0874">Quinone</keyword>
<keyword id="KW-1185">Reference proteome</keyword>
<keyword id="KW-0793">Thylakoid</keyword>
<keyword id="KW-1278">Translocase</keyword>
<keyword id="KW-0813">Transport</keyword>
<reference key="1">
    <citation type="journal article" date="2003" name="Proc. Natl. Acad. Sci. U.S.A.">
        <title>Genome sequence of the cyanobacterium Prochlorococcus marinus SS120, a nearly minimal oxyphototrophic genome.</title>
        <authorList>
            <person name="Dufresne A."/>
            <person name="Salanoubat M."/>
            <person name="Partensky F."/>
            <person name="Artiguenave F."/>
            <person name="Axmann I.M."/>
            <person name="Barbe V."/>
            <person name="Duprat S."/>
            <person name="Galperin M.Y."/>
            <person name="Koonin E.V."/>
            <person name="Le Gall F."/>
            <person name="Makarova K.S."/>
            <person name="Ostrowski M."/>
            <person name="Oztas S."/>
            <person name="Robert C."/>
            <person name="Rogozin I.B."/>
            <person name="Scanlan D.J."/>
            <person name="Tandeau de Marsac N."/>
            <person name="Weissenbach J."/>
            <person name="Wincker P."/>
            <person name="Wolf Y.I."/>
            <person name="Hess W.R."/>
        </authorList>
    </citation>
    <scope>NUCLEOTIDE SEQUENCE [LARGE SCALE GENOMIC DNA]</scope>
    <source>
        <strain>SARG / CCMP1375 / SS120</strain>
    </source>
</reference>
<gene>
    <name evidence="1" type="primary">ndhK</name>
    <name type="ordered locus">Pro_0324</name>
</gene>
<comment type="function">
    <text evidence="1">NDH-1 shuttles electrons from an unknown electron donor, via FMN and iron-sulfur (Fe-S) centers, to quinones in the respiratory and/or the photosynthetic chain. The immediate electron acceptor for the enzyme in this species is believed to be plastoquinone. Couples the redox reaction to proton translocation, and thus conserves the redox energy in a proton gradient. Cyanobacterial NDH-1 also plays a role in inorganic carbon-concentration.</text>
</comment>
<comment type="catalytic activity">
    <reaction evidence="1">
        <text>a plastoquinone + NADH + (n+1) H(+)(in) = a plastoquinol + NAD(+) + n H(+)(out)</text>
        <dbReference type="Rhea" id="RHEA:42608"/>
        <dbReference type="Rhea" id="RHEA-COMP:9561"/>
        <dbReference type="Rhea" id="RHEA-COMP:9562"/>
        <dbReference type="ChEBI" id="CHEBI:15378"/>
        <dbReference type="ChEBI" id="CHEBI:17757"/>
        <dbReference type="ChEBI" id="CHEBI:57540"/>
        <dbReference type="ChEBI" id="CHEBI:57945"/>
        <dbReference type="ChEBI" id="CHEBI:62192"/>
    </reaction>
</comment>
<comment type="catalytic activity">
    <reaction evidence="1">
        <text>a plastoquinone + NADPH + (n+1) H(+)(in) = a plastoquinol + NADP(+) + n H(+)(out)</text>
        <dbReference type="Rhea" id="RHEA:42612"/>
        <dbReference type="Rhea" id="RHEA-COMP:9561"/>
        <dbReference type="Rhea" id="RHEA-COMP:9562"/>
        <dbReference type="ChEBI" id="CHEBI:15378"/>
        <dbReference type="ChEBI" id="CHEBI:17757"/>
        <dbReference type="ChEBI" id="CHEBI:57783"/>
        <dbReference type="ChEBI" id="CHEBI:58349"/>
        <dbReference type="ChEBI" id="CHEBI:62192"/>
    </reaction>
</comment>
<comment type="cofactor">
    <cofactor evidence="1">
        <name>[4Fe-4S] cluster</name>
        <dbReference type="ChEBI" id="CHEBI:49883"/>
    </cofactor>
    <text evidence="1">Binds 1 [4Fe-4S] cluster.</text>
</comment>
<comment type="subunit">
    <text evidence="1">NDH-1 can be composed of about 15 different subunits; different subcomplexes with different compositions have been identified which probably have different functions.</text>
</comment>
<comment type="subcellular location">
    <subcellularLocation>
        <location evidence="1">Cellular thylakoid membrane</location>
        <topology evidence="1">Peripheral membrane protein</topology>
        <orientation evidence="1">Cytoplasmic side</orientation>
    </subcellularLocation>
</comment>
<comment type="similarity">
    <text evidence="1">Belongs to the complex I 20 kDa subunit family.</text>
</comment>
<sequence length="242" mass="26521">MNNIPSIEAVKDIRSGTCGPVAAPAVTSDLSENIILTSLDDLHNWARLSSLWPLLYGTACCFIEFAALIGSRFDFDRFGLVPRSSPRQADLLIVAGTVTMKMAPALVRLYEQMPDPKYVIAMGACTITGGMFSADSTTAVRGVDKLIPVDLYLPGCPPRPEAIFDAVIKLRKKVGNESFLERKKITQTHRYFTITHKMKRINPLVNGSYLNAKTQKAALKAGDDISLPTKSESIETTTKELN</sequence>
<organism>
    <name type="scientific">Prochlorococcus marinus (strain SARG / CCMP1375 / SS120)</name>
    <dbReference type="NCBI Taxonomy" id="167539"/>
    <lineage>
        <taxon>Bacteria</taxon>
        <taxon>Bacillati</taxon>
        <taxon>Cyanobacteriota</taxon>
        <taxon>Cyanophyceae</taxon>
        <taxon>Synechococcales</taxon>
        <taxon>Prochlorococcaceae</taxon>
        <taxon>Prochlorococcus</taxon>
    </lineage>
</organism>
<feature type="chain" id="PRO_0000358448" description="NAD(P)H-quinone oxidoreductase subunit K">
    <location>
        <begin position="1"/>
        <end position="242"/>
    </location>
</feature>
<feature type="binding site" evidence="1">
    <location>
        <position position="60"/>
    </location>
    <ligand>
        <name>[4Fe-4S] cluster</name>
        <dbReference type="ChEBI" id="CHEBI:49883"/>
    </ligand>
</feature>
<feature type="binding site" evidence="1">
    <location>
        <position position="61"/>
    </location>
    <ligand>
        <name>[4Fe-4S] cluster</name>
        <dbReference type="ChEBI" id="CHEBI:49883"/>
    </ligand>
</feature>
<feature type="binding site" evidence="1">
    <location>
        <position position="125"/>
    </location>
    <ligand>
        <name>[4Fe-4S] cluster</name>
        <dbReference type="ChEBI" id="CHEBI:49883"/>
    </ligand>
</feature>
<feature type="binding site" evidence="1">
    <location>
        <position position="156"/>
    </location>
    <ligand>
        <name>[4Fe-4S] cluster</name>
        <dbReference type="ChEBI" id="CHEBI:49883"/>
    </ligand>
</feature>
<protein>
    <recommendedName>
        <fullName evidence="1">NAD(P)H-quinone oxidoreductase subunit K</fullName>
        <ecNumber evidence="1">7.1.1.-</ecNumber>
    </recommendedName>
    <alternativeName>
        <fullName evidence="1">NAD(P)H dehydrogenase I subunit K</fullName>
    </alternativeName>
    <alternativeName>
        <fullName evidence="1">NDH-1 subunit K</fullName>
        <shortName evidence="1">NDH-K</shortName>
    </alternativeName>
</protein>
<evidence type="ECO:0000255" key="1">
    <source>
        <dbReference type="HAMAP-Rule" id="MF_01356"/>
    </source>
</evidence>